<evidence type="ECO:0000250" key="1">
    <source>
        <dbReference type="UniProtKB" id="Q8BYK5"/>
    </source>
</evidence>
<evidence type="ECO:0000255" key="2"/>
<evidence type="ECO:0000256" key="3">
    <source>
        <dbReference type="SAM" id="MobiDB-lite"/>
    </source>
</evidence>
<evidence type="ECO:0000303" key="4">
    <source>
    </source>
</evidence>
<evidence type="ECO:0000303" key="5">
    <source>
    </source>
</evidence>
<evidence type="ECO:0000303" key="6">
    <source ref="2"/>
</evidence>
<evidence type="ECO:0000305" key="7"/>
<evidence type="ECO:0007744" key="8">
    <source>
    </source>
</evidence>
<feature type="chain" id="PRO_0000126638" description="Phosphatase and actin regulator 3">
    <location>
        <begin position="1"/>
        <end position="559"/>
    </location>
</feature>
<feature type="repeat" description="RPEL 1">
    <location>
        <begin position="93"/>
        <end position="118"/>
    </location>
</feature>
<feature type="repeat" description="RPEL 2">
    <location>
        <begin position="401"/>
        <end position="426"/>
    </location>
</feature>
<feature type="repeat" description="RPEL 3">
    <location>
        <begin position="439"/>
        <end position="464"/>
    </location>
</feature>
<feature type="repeat" description="RPEL 4">
    <location>
        <begin position="477"/>
        <end position="502"/>
    </location>
</feature>
<feature type="region of interest" description="Disordered" evidence="3">
    <location>
        <begin position="1"/>
        <end position="65"/>
    </location>
</feature>
<feature type="region of interest" description="Disordered" evidence="3">
    <location>
        <begin position="82"/>
        <end position="342"/>
    </location>
</feature>
<feature type="region of interest" description="Required for PP1CA binding and inhibition of PP1 activity">
    <location>
        <begin position="438"/>
        <end position="518"/>
    </location>
</feature>
<feature type="coiled-coil region" evidence="2">
    <location>
        <begin position="346"/>
        <end position="369"/>
    </location>
</feature>
<feature type="coiled-coil region" evidence="2">
    <location>
        <begin position="450"/>
        <end position="486"/>
    </location>
</feature>
<feature type="compositionally biased region" description="Polar residues" evidence="3">
    <location>
        <begin position="15"/>
        <end position="24"/>
    </location>
</feature>
<feature type="compositionally biased region" description="Low complexity" evidence="3">
    <location>
        <begin position="25"/>
        <end position="35"/>
    </location>
</feature>
<feature type="compositionally biased region" description="Basic and acidic residues" evidence="3">
    <location>
        <begin position="95"/>
        <end position="113"/>
    </location>
</feature>
<feature type="compositionally biased region" description="Polar residues" evidence="3">
    <location>
        <begin position="134"/>
        <end position="151"/>
    </location>
</feature>
<feature type="compositionally biased region" description="Pro residues" evidence="3">
    <location>
        <begin position="229"/>
        <end position="240"/>
    </location>
</feature>
<feature type="compositionally biased region" description="Polar residues" evidence="3">
    <location>
        <begin position="248"/>
        <end position="262"/>
    </location>
</feature>
<feature type="compositionally biased region" description="Polar residues" evidence="3">
    <location>
        <begin position="270"/>
        <end position="281"/>
    </location>
</feature>
<feature type="compositionally biased region" description="Basic and acidic residues" evidence="3">
    <location>
        <begin position="293"/>
        <end position="342"/>
    </location>
</feature>
<feature type="modified residue" description="Phosphothreonine" evidence="8">
    <location>
        <position position="70"/>
    </location>
</feature>
<feature type="modified residue" description="Phosphoserine" evidence="1">
    <location>
        <position position="230"/>
    </location>
</feature>
<feature type="modified residue" description="Phosphothreonine" evidence="1">
    <location>
        <position position="236"/>
    </location>
</feature>
<feature type="splice variant" id="VSP_009091" description="In isoform 2 and isoform 3." evidence="4 5 6">
    <location>
        <begin position="1"/>
        <end position="41"/>
    </location>
</feature>
<feature type="splice variant" id="VSP_044546" description="In isoform 4." evidence="5">
    <original>MAASEDGSGCLVSRGRSQSDPSVLTDSSATSSADAGENP</original>
    <variation>MRGRGGGRARCPAPLRSLLGAFGARDAAAAARDPAQ</variation>
    <location>
        <begin position="1"/>
        <end position="39"/>
    </location>
</feature>
<feature type="splice variant" id="VSP_009092" description="In isoform 3." evidence="4">
    <location>
        <begin position="181"/>
        <end position="250"/>
    </location>
</feature>
<feature type="sequence variant" id="VAR_021969" description="In dbSNP:rs2277759.">
    <original>P</original>
    <variation>L</variation>
    <location>
        <position position="154"/>
    </location>
</feature>
<feature type="sequence conflict" description="In Ref. 3; AK098788." evidence="7" ref="3">
    <original>V</original>
    <variation>M</variation>
    <location>
        <position position="62"/>
    </location>
</feature>
<feature type="sequence conflict" description="In Ref. 3; AK098788." evidence="7" ref="3">
    <original>E</original>
    <variation>G</variation>
    <location>
        <position position="118"/>
    </location>
</feature>
<feature type="sequence conflict" description="In Ref. 2; CAF04087." evidence="7" ref="2">
    <original>K</original>
    <variation>R</variation>
    <location>
        <position position="321"/>
    </location>
</feature>
<feature type="sequence conflict" description="In Ref. 2; CAF04087." evidence="7" ref="2">
    <original>K</original>
    <variation>R</variation>
    <location>
        <position position="399"/>
    </location>
</feature>
<comment type="subunit">
    <text>Binds actin and PPP1CA; thus inhibiting the protein phosphatase 1 (PP1) activity.</text>
</comment>
<comment type="interaction">
    <interactant intactId="EBI-717068">
        <id>Q96KR7</id>
    </interactant>
    <interactant intactId="EBI-12188723">
        <id>Q96L46</id>
        <label>CAPNS2</label>
    </interactant>
    <organismsDiffer>false</organismsDiffer>
    <experiments>3</experiments>
</comment>
<comment type="interaction">
    <interactant intactId="EBI-717068">
        <id>Q96KR7</id>
    </interactant>
    <interactant intactId="EBI-1058710">
        <id>O43169</id>
        <label>CYB5B</label>
    </interactant>
    <organismsDiffer>false</organismsDiffer>
    <experiments>3</experiments>
</comment>
<comment type="interaction">
    <interactant intactId="EBI-717068">
        <id>Q96KR7</id>
    </interactant>
    <interactant intactId="EBI-11721828">
        <id>Q8IY26</id>
        <label>PLPP6</label>
    </interactant>
    <organismsDiffer>false</organismsDiffer>
    <experiments>3</experiments>
</comment>
<comment type="interaction">
    <interactant intactId="EBI-717068">
        <id>Q96KR7</id>
    </interactant>
    <interactant intactId="EBI-352350">
        <id>P62140</id>
        <label>PPP1CB</label>
    </interactant>
    <organismsDiffer>false</organismsDiffer>
    <experiments>3</experiments>
</comment>
<comment type="interaction">
    <interactant intactId="EBI-717068">
        <id>Q96KR7</id>
    </interactant>
    <interactant intactId="EBI-2819725">
        <id>Q9Y5Z9</id>
        <label>UBIAD1</label>
    </interactant>
    <organismsDiffer>false</organismsDiffer>
    <experiments>3</experiments>
</comment>
<comment type="interaction">
    <interactant intactId="EBI-717068">
        <id>Q96KR7</id>
    </interactant>
    <interactant intactId="EBI-607755">
        <id>Q9BZL1</id>
        <label>UBL5</label>
    </interactant>
    <organismsDiffer>false</organismsDiffer>
    <experiments>3</experiments>
</comment>
<comment type="subcellular location">
    <subcellularLocation>
        <location>Nucleus matrix</location>
    </subcellularLocation>
    <text>Localized to the nuclear matrix-intermediate filament scaffold. Isoform 2 is also found in some cytoplasmic extensions.</text>
</comment>
<comment type="alternative products">
    <event type="alternative splicing"/>
    <isoform>
        <id>Q96KR7-1</id>
        <name>1</name>
        <name>Scapinin 1B</name>
        <sequence type="displayed"/>
    </isoform>
    <isoform>
        <id>Q96KR7-2</id>
        <name>2</name>
        <name>Scapinin-L</name>
        <name>Scapinin 1C</name>
        <sequence type="described" ref="VSP_009091"/>
    </isoform>
    <isoform>
        <id>Q96KR7-3</id>
        <name>3</name>
        <name>Scapinin-S</name>
        <sequence type="described" ref="VSP_009091 VSP_009092"/>
    </isoform>
    <isoform>
        <id>Q96KR7-4</id>
        <name>4</name>
        <sequence type="described" ref="VSP_044546"/>
    </isoform>
</comment>
<comment type="tissue specificity">
    <text>Abundantly expressed in brain. Also found in several tumors such as lung carcinomas, nervous tumors and HL-60 leukemia cells. Isoform 3 is the major form in U-937, GOTO and HL-60 leukemia cells.</text>
</comment>
<comment type="induction">
    <text>Down-regulated in HL-60 leukemia cells by RA, PMA and dimethyl sulfoxide.</text>
</comment>
<comment type="similarity">
    <text evidence="7">Belongs to the phosphatase and actin regulator family.</text>
</comment>
<comment type="sequence caution" evidence="7">
    <conflict type="erroneous initiation">
        <sequence resource="EMBL-CDS" id="CAC67489"/>
    </conflict>
</comment>
<reference key="1">
    <citation type="journal article" date="2003" name="J. Biol. Chem.">
        <title>Scapinin, a putative protein phosphatase-1 regulatory subunit associated with the nuclear nonchromatin structure.</title>
        <authorList>
            <person name="Sagara J."/>
            <person name="Higuchi T."/>
            <person name="Hattori Y."/>
            <person name="Moriya M."/>
            <person name="Sarvotham H."/>
            <person name="Shima H."/>
            <person name="Shirato H."/>
            <person name="Kikuchi K."/>
            <person name="Taniguchi S."/>
        </authorList>
    </citation>
    <scope>NUCLEOTIDE SEQUENCE [MRNA] (ISOFORMS 2 AND 3)</scope>
    <scope>INTERACTION WITH PP1CA</scope>
    <source>
        <tissue>Promyelocytic leukemia</tissue>
    </source>
</reference>
<reference key="2">
    <citation type="submission" date="2003-12" db="EMBL/GenBank/DDBJ databases">
        <title>Structure and expression of scapinin in mouse and human.</title>
        <authorList>
            <person name="Worch S."/>
            <person name="Kussmann S."/>
            <person name="Hansmann I."/>
            <person name="Schlote D."/>
        </authorList>
    </citation>
    <scope>NUCLEOTIDE SEQUENCE [MRNA] (ISOFORMS 1 AND 2)</scope>
    <source>
        <tissue>Brain</tissue>
    </source>
</reference>
<reference key="3">
    <citation type="journal article" date="2004" name="Nat. Genet.">
        <title>Complete sequencing and characterization of 21,243 full-length human cDNAs.</title>
        <authorList>
            <person name="Ota T."/>
            <person name="Suzuki Y."/>
            <person name="Nishikawa T."/>
            <person name="Otsuki T."/>
            <person name="Sugiyama T."/>
            <person name="Irie R."/>
            <person name="Wakamatsu A."/>
            <person name="Hayashi K."/>
            <person name="Sato H."/>
            <person name="Nagai K."/>
            <person name="Kimura K."/>
            <person name="Makita H."/>
            <person name="Sekine M."/>
            <person name="Obayashi M."/>
            <person name="Nishi T."/>
            <person name="Shibahara T."/>
            <person name="Tanaka T."/>
            <person name="Ishii S."/>
            <person name="Yamamoto J."/>
            <person name="Saito K."/>
            <person name="Kawai Y."/>
            <person name="Isono Y."/>
            <person name="Nakamura Y."/>
            <person name="Nagahari K."/>
            <person name="Murakami K."/>
            <person name="Yasuda T."/>
            <person name="Iwayanagi T."/>
            <person name="Wagatsuma M."/>
            <person name="Shiratori A."/>
            <person name="Sudo H."/>
            <person name="Hosoiri T."/>
            <person name="Kaku Y."/>
            <person name="Kodaira H."/>
            <person name="Kondo H."/>
            <person name="Sugawara M."/>
            <person name="Takahashi M."/>
            <person name="Kanda K."/>
            <person name="Yokoi T."/>
            <person name="Furuya T."/>
            <person name="Kikkawa E."/>
            <person name="Omura Y."/>
            <person name="Abe K."/>
            <person name="Kamihara K."/>
            <person name="Katsuta N."/>
            <person name="Sato K."/>
            <person name="Tanikawa M."/>
            <person name="Yamazaki M."/>
            <person name="Ninomiya K."/>
            <person name="Ishibashi T."/>
            <person name="Yamashita H."/>
            <person name="Murakawa K."/>
            <person name="Fujimori K."/>
            <person name="Tanai H."/>
            <person name="Kimata M."/>
            <person name="Watanabe M."/>
            <person name="Hiraoka S."/>
            <person name="Chiba Y."/>
            <person name="Ishida S."/>
            <person name="Ono Y."/>
            <person name="Takiguchi S."/>
            <person name="Watanabe S."/>
            <person name="Yosida M."/>
            <person name="Hotuta T."/>
            <person name="Kusano J."/>
            <person name="Kanehori K."/>
            <person name="Takahashi-Fujii A."/>
            <person name="Hara H."/>
            <person name="Tanase T.-O."/>
            <person name="Nomura Y."/>
            <person name="Togiya S."/>
            <person name="Komai F."/>
            <person name="Hara R."/>
            <person name="Takeuchi K."/>
            <person name="Arita M."/>
            <person name="Imose N."/>
            <person name="Musashino K."/>
            <person name="Yuuki H."/>
            <person name="Oshima A."/>
            <person name="Sasaki N."/>
            <person name="Aotsuka S."/>
            <person name="Yoshikawa Y."/>
            <person name="Matsunawa H."/>
            <person name="Ichihara T."/>
            <person name="Shiohata N."/>
            <person name="Sano S."/>
            <person name="Moriya S."/>
            <person name="Momiyama H."/>
            <person name="Satoh N."/>
            <person name="Takami S."/>
            <person name="Terashima Y."/>
            <person name="Suzuki O."/>
            <person name="Nakagawa S."/>
            <person name="Senoh A."/>
            <person name="Mizoguchi H."/>
            <person name="Goto Y."/>
            <person name="Shimizu F."/>
            <person name="Wakebe H."/>
            <person name="Hishigaki H."/>
            <person name="Watanabe T."/>
            <person name="Sugiyama A."/>
            <person name="Takemoto M."/>
            <person name="Kawakami B."/>
            <person name="Yamazaki M."/>
            <person name="Watanabe K."/>
            <person name="Kumagai A."/>
            <person name="Itakura S."/>
            <person name="Fukuzumi Y."/>
            <person name="Fujimori Y."/>
            <person name="Komiyama M."/>
            <person name="Tashiro H."/>
            <person name="Tanigami A."/>
            <person name="Fujiwara T."/>
            <person name="Ono T."/>
            <person name="Yamada K."/>
            <person name="Fujii Y."/>
            <person name="Ozaki K."/>
            <person name="Hirao M."/>
            <person name="Ohmori Y."/>
            <person name="Kawabata A."/>
            <person name="Hikiji T."/>
            <person name="Kobatake N."/>
            <person name="Inagaki H."/>
            <person name="Ikema Y."/>
            <person name="Okamoto S."/>
            <person name="Okitani R."/>
            <person name="Kawakami T."/>
            <person name="Noguchi S."/>
            <person name="Itoh T."/>
            <person name="Shigeta K."/>
            <person name="Senba T."/>
            <person name="Matsumura K."/>
            <person name="Nakajima Y."/>
            <person name="Mizuno T."/>
            <person name="Morinaga M."/>
            <person name="Sasaki M."/>
            <person name="Togashi T."/>
            <person name="Oyama M."/>
            <person name="Hata H."/>
            <person name="Watanabe M."/>
            <person name="Komatsu T."/>
            <person name="Mizushima-Sugano J."/>
            <person name="Satoh T."/>
            <person name="Shirai Y."/>
            <person name="Takahashi Y."/>
            <person name="Nakagawa K."/>
            <person name="Okumura K."/>
            <person name="Nagase T."/>
            <person name="Nomura N."/>
            <person name="Kikuchi H."/>
            <person name="Masuho Y."/>
            <person name="Yamashita R."/>
            <person name="Nakai K."/>
            <person name="Yada T."/>
            <person name="Nakamura Y."/>
            <person name="Ohara O."/>
            <person name="Isogai T."/>
            <person name="Sugano S."/>
        </authorList>
    </citation>
    <scope>NUCLEOTIDE SEQUENCE [LARGE SCALE MRNA] (ISOFORMS 1; 2 AND 4)</scope>
    <source>
        <tissue>Brain</tissue>
        <tissue>Hippocampus</tissue>
        <tissue>Kidney</tissue>
    </source>
</reference>
<reference key="4">
    <citation type="journal article" date="2001" name="Nature">
        <title>The DNA sequence and comparative analysis of human chromosome 20.</title>
        <authorList>
            <person name="Deloukas P."/>
            <person name="Matthews L.H."/>
            <person name="Ashurst J.L."/>
            <person name="Burton J."/>
            <person name="Gilbert J.G.R."/>
            <person name="Jones M."/>
            <person name="Stavrides G."/>
            <person name="Almeida J.P."/>
            <person name="Babbage A.K."/>
            <person name="Bagguley C.L."/>
            <person name="Bailey J."/>
            <person name="Barlow K.F."/>
            <person name="Bates K.N."/>
            <person name="Beard L.M."/>
            <person name="Beare D.M."/>
            <person name="Beasley O.P."/>
            <person name="Bird C.P."/>
            <person name="Blakey S.E."/>
            <person name="Bridgeman A.M."/>
            <person name="Brown A.J."/>
            <person name="Buck D."/>
            <person name="Burrill W.D."/>
            <person name="Butler A.P."/>
            <person name="Carder C."/>
            <person name="Carter N.P."/>
            <person name="Chapman J.C."/>
            <person name="Clamp M."/>
            <person name="Clark G."/>
            <person name="Clark L.N."/>
            <person name="Clark S.Y."/>
            <person name="Clee C.M."/>
            <person name="Clegg S."/>
            <person name="Cobley V.E."/>
            <person name="Collier R.E."/>
            <person name="Connor R.E."/>
            <person name="Corby N.R."/>
            <person name="Coulson A."/>
            <person name="Coville G.J."/>
            <person name="Deadman R."/>
            <person name="Dhami P.D."/>
            <person name="Dunn M."/>
            <person name="Ellington A.G."/>
            <person name="Frankland J.A."/>
            <person name="Fraser A."/>
            <person name="French L."/>
            <person name="Garner P."/>
            <person name="Grafham D.V."/>
            <person name="Griffiths C."/>
            <person name="Griffiths M.N.D."/>
            <person name="Gwilliam R."/>
            <person name="Hall R.E."/>
            <person name="Hammond S."/>
            <person name="Harley J.L."/>
            <person name="Heath P.D."/>
            <person name="Ho S."/>
            <person name="Holden J.L."/>
            <person name="Howden P.J."/>
            <person name="Huckle E."/>
            <person name="Hunt A.R."/>
            <person name="Hunt S.E."/>
            <person name="Jekosch K."/>
            <person name="Johnson C.M."/>
            <person name="Johnson D."/>
            <person name="Kay M.P."/>
            <person name="Kimberley A.M."/>
            <person name="King A."/>
            <person name="Knights A."/>
            <person name="Laird G.K."/>
            <person name="Lawlor S."/>
            <person name="Lehvaeslaiho M.H."/>
            <person name="Leversha M.A."/>
            <person name="Lloyd C."/>
            <person name="Lloyd D.M."/>
            <person name="Lovell J.D."/>
            <person name="Marsh V.L."/>
            <person name="Martin S.L."/>
            <person name="McConnachie L.J."/>
            <person name="McLay K."/>
            <person name="McMurray A.A."/>
            <person name="Milne S.A."/>
            <person name="Mistry D."/>
            <person name="Moore M.J.F."/>
            <person name="Mullikin J.C."/>
            <person name="Nickerson T."/>
            <person name="Oliver K."/>
            <person name="Parker A."/>
            <person name="Patel R."/>
            <person name="Pearce T.A.V."/>
            <person name="Peck A.I."/>
            <person name="Phillimore B.J.C.T."/>
            <person name="Prathalingam S.R."/>
            <person name="Plumb R.W."/>
            <person name="Ramsay H."/>
            <person name="Rice C.M."/>
            <person name="Ross M.T."/>
            <person name="Scott C.E."/>
            <person name="Sehra H.K."/>
            <person name="Shownkeen R."/>
            <person name="Sims S."/>
            <person name="Skuce C.D."/>
            <person name="Smith M.L."/>
            <person name="Soderlund C."/>
            <person name="Steward C.A."/>
            <person name="Sulston J.E."/>
            <person name="Swann R.M."/>
            <person name="Sycamore N."/>
            <person name="Taylor R."/>
            <person name="Tee L."/>
            <person name="Thomas D.W."/>
            <person name="Thorpe A."/>
            <person name="Tracey A."/>
            <person name="Tromans A.C."/>
            <person name="Vaudin M."/>
            <person name="Wall M."/>
            <person name="Wallis J.M."/>
            <person name="Whitehead S.L."/>
            <person name="Whittaker P."/>
            <person name="Willey D.L."/>
            <person name="Williams L."/>
            <person name="Williams S.A."/>
            <person name="Wilming L."/>
            <person name="Wray P.W."/>
            <person name="Hubbard T."/>
            <person name="Durbin R.M."/>
            <person name="Bentley D.R."/>
            <person name="Beck S."/>
            <person name="Rogers J."/>
        </authorList>
    </citation>
    <scope>NUCLEOTIDE SEQUENCE [LARGE SCALE GENOMIC DNA]</scope>
</reference>
<reference key="5">
    <citation type="submission" date="2005-09" db="EMBL/GenBank/DDBJ databases">
        <authorList>
            <person name="Mural R.J."/>
            <person name="Istrail S."/>
            <person name="Sutton G.G."/>
            <person name="Florea L."/>
            <person name="Halpern A.L."/>
            <person name="Mobarry C.M."/>
            <person name="Lippert R."/>
            <person name="Walenz B."/>
            <person name="Shatkay H."/>
            <person name="Dew I."/>
            <person name="Miller J.R."/>
            <person name="Flanigan M.J."/>
            <person name="Edwards N.J."/>
            <person name="Bolanos R."/>
            <person name="Fasulo D."/>
            <person name="Halldorsson B.V."/>
            <person name="Hannenhalli S."/>
            <person name="Turner R."/>
            <person name="Yooseph S."/>
            <person name="Lu F."/>
            <person name="Nusskern D.R."/>
            <person name="Shue B.C."/>
            <person name="Zheng X.H."/>
            <person name="Zhong F."/>
            <person name="Delcher A.L."/>
            <person name="Huson D.H."/>
            <person name="Kravitz S.A."/>
            <person name="Mouchard L."/>
            <person name="Reinert K."/>
            <person name="Remington K.A."/>
            <person name="Clark A.G."/>
            <person name="Waterman M.S."/>
            <person name="Eichler E.E."/>
            <person name="Adams M.D."/>
            <person name="Hunkapiller M.W."/>
            <person name="Myers E.W."/>
            <person name="Venter J.C."/>
        </authorList>
    </citation>
    <scope>NUCLEOTIDE SEQUENCE [LARGE SCALE GENOMIC DNA]</scope>
</reference>
<reference key="6">
    <citation type="journal article" date="2004" name="Genome Res.">
        <title>The status, quality, and expansion of the NIH full-length cDNA project: the Mammalian Gene Collection (MGC).</title>
        <authorList>
            <consortium name="The MGC Project Team"/>
        </authorList>
    </citation>
    <scope>NUCLEOTIDE SEQUENCE [LARGE SCALE MRNA] (ISOFORM 1)</scope>
    <source>
        <tissue>Brain</tissue>
    </source>
</reference>
<reference key="7">
    <citation type="journal article" date="2007" name="Mol. Cell. Proteomics">
        <title>Quantitative phosphoproteome profiling of Wnt3a-mediated signaling network: indicating the involvement of ribonucleoside-diphosphate reductase M2 subunit phosphorylation at residue serine 20 in canonical Wnt signal transduction.</title>
        <authorList>
            <person name="Tang L.-Y."/>
            <person name="Deng N."/>
            <person name="Wang L.-S."/>
            <person name="Dai J."/>
            <person name="Wang Z.-L."/>
            <person name="Jiang X.-S."/>
            <person name="Li S.-J."/>
            <person name="Li L."/>
            <person name="Sheng Q.-H."/>
            <person name="Wu D.-Q."/>
            <person name="Li L."/>
            <person name="Zeng R."/>
        </authorList>
    </citation>
    <scope>PHOSPHORYLATION [LARGE SCALE ANALYSIS] AT THR-70</scope>
    <scope>IDENTIFICATION BY MASS SPECTROMETRY [LARGE SCALE ANALYSIS]</scope>
    <source>
        <tissue>Embryonic kidney</tissue>
    </source>
</reference>
<accession>Q96KR7</accession>
<accession>B1AKX0</accession>
<accession>B1AN68</accession>
<accession>B1AN69</accession>
<accession>B2RB46</accession>
<accession>Q32P33</accession>
<accession>Q707P6</accession>
<accession>Q9H4T4</accession>
<proteinExistence type="evidence at protein level"/>
<name>PHAR3_HUMAN</name>
<dbReference type="EMBL" id="AB098521">
    <property type="protein sequence ID" value="BAC82348.1"/>
    <property type="molecule type" value="mRNA"/>
</dbReference>
<dbReference type="EMBL" id="AB098522">
    <property type="protein sequence ID" value="BAC82349.1"/>
    <property type="molecule type" value="mRNA"/>
</dbReference>
<dbReference type="EMBL" id="AJ311122">
    <property type="protein sequence ID" value="CAC67489.2"/>
    <property type="status" value="ALT_INIT"/>
    <property type="molecule type" value="mRNA"/>
</dbReference>
<dbReference type="EMBL" id="AJ617581">
    <property type="protein sequence ID" value="CAF04087.1"/>
    <property type="molecule type" value="mRNA"/>
</dbReference>
<dbReference type="EMBL" id="AK098788">
    <property type="status" value="NOT_ANNOTATED_CDS"/>
    <property type="molecule type" value="mRNA"/>
</dbReference>
<dbReference type="EMBL" id="AK314493">
    <property type="protein sequence ID" value="BAG37093.1"/>
    <property type="molecule type" value="mRNA"/>
</dbReference>
<dbReference type="EMBL" id="AK316047">
    <property type="protein sequence ID" value="BAH14418.1"/>
    <property type="molecule type" value="mRNA"/>
</dbReference>
<dbReference type="EMBL" id="AL121908">
    <property type="status" value="NOT_ANNOTATED_CDS"/>
    <property type="molecule type" value="Genomic_DNA"/>
</dbReference>
<dbReference type="EMBL" id="AL357503">
    <property type="status" value="NOT_ANNOTATED_CDS"/>
    <property type="molecule type" value="Genomic_DNA"/>
</dbReference>
<dbReference type="EMBL" id="CH471077">
    <property type="protein sequence ID" value="EAW75428.1"/>
    <property type="molecule type" value="Genomic_DNA"/>
</dbReference>
<dbReference type="EMBL" id="CH471077">
    <property type="protein sequence ID" value="EAW75429.1"/>
    <property type="molecule type" value="Genomic_DNA"/>
</dbReference>
<dbReference type="EMBL" id="CH471077">
    <property type="protein sequence ID" value="EAW75430.1"/>
    <property type="molecule type" value="Genomic_DNA"/>
</dbReference>
<dbReference type="EMBL" id="BC108303">
    <property type="protein sequence ID" value="AAI08304.1"/>
    <property type="molecule type" value="mRNA"/>
</dbReference>
<dbReference type="EMBL" id="BC117362">
    <property type="protein sequence ID" value="AAI17363.1"/>
    <property type="molecule type" value="mRNA"/>
</dbReference>
<dbReference type="EMBL" id="BC117364">
    <property type="protein sequence ID" value="AAI17365.1"/>
    <property type="molecule type" value="mRNA"/>
</dbReference>
<dbReference type="CCDS" id="CCDS13480.1">
    <molecule id="Q96KR7-1"/>
</dbReference>
<dbReference type="CCDS" id="CCDS13481.1">
    <molecule id="Q96KR7-3"/>
</dbReference>
<dbReference type="CCDS" id="CCDS42895.1">
    <molecule id="Q96KR7-2"/>
</dbReference>
<dbReference type="CCDS" id="CCDS56202.1">
    <molecule id="Q96KR7-4"/>
</dbReference>
<dbReference type="RefSeq" id="NP_001186434.1">
    <molecule id="Q96KR7-4"/>
    <property type="nucleotide sequence ID" value="NM_001199505.1"/>
</dbReference>
<dbReference type="RefSeq" id="NP_001186435.1">
    <molecule id="Q96KR7-2"/>
    <property type="nucleotide sequence ID" value="NM_001199506.2"/>
</dbReference>
<dbReference type="RefSeq" id="NP_001268436.1">
    <molecule id="Q96KR7-2"/>
    <property type="nucleotide sequence ID" value="NM_001281507.2"/>
</dbReference>
<dbReference type="RefSeq" id="NP_542403.1">
    <molecule id="Q96KR7-1"/>
    <property type="nucleotide sequence ID" value="NM_080672.5"/>
</dbReference>
<dbReference type="RefSeq" id="NP_899067.1">
    <molecule id="Q96KR7-2"/>
    <property type="nucleotide sequence ID" value="NM_183244.2"/>
</dbReference>
<dbReference type="RefSeq" id="NP_899069.1">
    <molecule id="Q96KR7-3"/>
    <property type="nucleotide sequence ID" value="NM_183246.2"/>
</dbReference>
<dbReference type="RefSeq" id="XP_011526827.1">
    <molecule id="Q96KR7-2"/>
    <property type="nucleotide sequence ID" value="XM_011528525.3"/>
</dbReference>
<dbReference type="RefSeq" id="XP_016883115.1">
    <molecule id="Q96KR7-2"/>
    <property type="nucleotide sequence ID" value="XM_017027626.3"/>
</dbReference>
<dbReference type="RefSeq" id="XP_016883116.1">
    <molecule id="Q96KR7-2"/>
    <property type="nucleotide sequence ID" value="XM_017027627.3"/>
</dbReference>
<dbReference type="RefSeq" id="XP_016883118.1">
    <property type="nucleotide sequence ID" value="XM_017027629.1"/>
</dbReference>
<dbReference type="RefSeq" id="XP_016883119.1">
    <molecule id="Q96KR7-3"/>
    <property type="nucleotide sequence ID" value="XM_017027630.2"/>
</dbReference>
<dbReference type="RefSeq" id="XP_016883120.1">
    <molecule id="Q96KR7-2"/>
    <property type="nucleotide sequence ID" value="XM_017027631.2"/>
</dbReference>
<dbReference type="RefSeq" id="XP_054178898.1">
    <molecule id="Q96KR7-2"/>
    <property type="nucleotide sequence ID" value="XM_054322923.1"/>
</dbReference>
<dbReference type="RefSeq" id="XP_054178899.1">
    <molecule id="Q96KR7-2"/>
    <property type="nucleotide sequence ID" value="XM_054322924.1"/>
</dbReference>
<dbReference type="RefSeq" id="XP_054178900.1">
    <molecule id="Q96KR7-2"/>
    <property type="nucleotide sequence ID" value="XM_054322925.1"/>
</dbReference>
<dbReference type="RefSeq" id="XP_054178903.1">
    <molecule id="Q96KR7-3"/>
    <property type="nucleotide sequence ID" value="XM_054322928.1"/>
</dbReference>
<dbReference type="RefSeq" id="XP_054178904.1">
    <molecule id="Q96KR7-2"/>
    <property type="nucleotide sequence ID" value="XM_054322929.1"/>
</dbReference>
<dbReference type="SMR" id="Q96KR7"/>
<dbReference type="BioGRID" id="125483">
    <property type="interactions" value="35"/>
</dbReference>
<dbReference type="FunCoup" id="Q96KR7">
    <property type="interactions" value="719"/>
</dbReference>
<dbReference type="IntAct" id="Q96KR7">
    <property type="interactions" value="34"/>
</dbReference>
<dbReference type="MINT" id="Q96KR7"/>
<dbReference type="STRING" id="9606.ENSP00000360054"/>
<dbReference type="GlyGen" id="Q96KR7">
    <property type="glycosylation" value="2 sites, 1 O-linked glycan (1 site)"/>
</dbReference>
<dbReference type="iPTMnet" id="Q96KR7"/>
<dbReference type="PhosphoSitePlus" id="Q96KR7"/>
<dbReference type="BioMuta" id="PHACTR3"/>
<dbReference type="DMDM" id="38605426"/>
<dbReference type="MassIVE" id="Q96KR7"/>
<dbReference type="PaxDb" id="9606-ENSP00000360054"/>
<dbReference type="PeptideAtlas" id="Q96KR7"/>
<dbReference type="ProteomicsDB" id="3118"/>
<dbReference type="ProteomicsDB" id="77109">
    <molecule id="Q96KR7-1"/>
</dbReference>
<dbReference type="ProteomicsDB" id="77110">
    <molecule id="Q96KR7-2"/>
</dbReference>
<dbReference type="ProteomicsDB" id="77111">
    <molecule id="Q96KR7-3"/>
</dbReference>
<dbReference type="Antibodypedia" id="29289">
    <property type="antibodies" value="114 antibodies from 22 providers"/>
</dbReference>
<dbReference type="DNASU" id="116154"/>
<dbReference type="Ensembl" id="ENST00000355648.8">
    <molecule id="Q96KR7-2"/>
    <property type="protein sequence ID" value="ENSP00000347866.4"/>
    <property type="gene ID" value="ENSG00000087495.17"/>
</dbReference>
<dbReference type="Ensembl" id="ENST00000359926.7">
    <molecule id="Q96KR7-4"/>
    <property type="protein sequence ID" value="ENSP00000353002.3"/>
    <property type="gene ID" value="ENSG00000087495.17"/>
</dbReference>
<dbReference type="Ensembl" id="ENST00000361300.4">
    <molecule id="Q96KR7-3"/>
    <property type="protein sequence ID" value="ENSP00000354555.4"/>
    <property type="gene ID" value="ENSG00000087495.17"/>
</dbReference>
<dbReference type="Ensembl" id="ENST00000371015.6">
    <molecule id="Q96KR7-1"/>
    <property type="protein sequence ID" value="ENSP00000360054.1"/>
    <property type="gene ID" value="ENSG00000087495.17"/>
</dbReference>
<dbReference type="Ensembl" id="ENST00000395636.6">
    <molecule id="Q96KR7-2"/>
    <property type="protein sequence ID" value="ENSP00000378998.2"/>
    <property type="gene ID" value="ENSG00000087495.17"/>
</dbReference>
<dbReference type="Ensembl" id="ENST00000541461.5">
    <molecule id="Q96KR7-2"/>
    <property type="protein sequence ID" value="ENSP00000442483.1"/>
    <property type="gene ID" value="ENSG00000087495.17"/>
</dbReference>
<dbReference type="GeneID" id="116154"/>
<dbReference type="KEGG" id="hsa:116154"/>
<dbReference type="MANE-Select" id="ENST00000371015.6">
    <property type="protein sequence ID" value="ENSP00000360054.1"/>
    <property type="RefSeq nucleotide sequence ID" value="NM_080672.5"/>
    <property type="RefSeq protein sequence ID" value="NP_542403.1"/>
</dbReference>
<dbReference type="UCSC" id="uc002yat.3">
    <molecule id="Q96KR7-1"/>
    <property type="organism name" value="human"/>
</dbReference>
<dbReference type="AGR" id="HGNC:15833"/>
<dbReference type="CTD" id="116154"/>
<dbReference type="DisGeNET" id="116154"/>
<dbReference type="GeneCards" id="PHACTR3"/>
<dbReference type="HGNC" id="HGNC:15833">
    <property type="gene designation" value="PHACTR3"/>
</dbReference>
<dbReference type="HPA" id="ENSG00000087495">
    <property type="expression patterns" value="Tissue enriched (brain)"/>
</dbReference>
<dbReference type="MIM" id="608725">
    <property type="type" value="gene"/>
</dbReference>
<dbReference type="neXtProt" id="NX_Q96KR7"/>
<dbReference type="OpenTargets" id="ENSG00000087495"/>
<dbReference type="PharmGKB" id="PA128394750"/>
<dbReference type="VEuPathDB" id="HostDB:ENSG00000087495"/>
<dbReference type="eggNOG" id="KOG4339">
    <property type="taxonomic scope" value="Eukaryota"/>
</dbReference>
<dbReference type="GeneTree" id="ENSGT00940000157562"/>
<dbReference type="HOGENOM" id="CLU_015753_3_1_1"/>
<dbReference type="InParanoid" id="Q96KR7"/>
<dbReference type="OMA" id="AESKACT"/>
<dbReference type="OrthoDB" id="5563016at2759"/>
<dbReference type="PAN-GO" id="Q96KR7">
    <property type="GO annotations" value="2 GO annotations based on evolutionary models"/>
</dbReference>
<dbReference type="PhylomeDB" id="Q96KR7"/>
<dbReference type="TreeFam" id="TF316316"/>
<dbReference type="PathwayCommons" id="Q96KR7"/>
<dbReference type="SignaLink" id="Q96KR7"/>
<dbReference type="SIGNOR" id="Q96KR7"/>
<dbReference type="BioGRID-ORCS" id="116154">
    <property type="hits" value="18 hits in 1151 CRISPR screens"/>
</dbReference>
<dbReference type="ChiTaRS" id="PHACTR3">
    <property type="organism name" value="human"/>
</dbReference>
<dbReference type="GeneWiki" id="PHACTR3"/>
<dbReference type="GenomeRNAi" id="116154"/>
<dbReference type="Pharos" id="Q96KR7">
    <property type="development level" value="Tbio"/>
</dbReference>
<dbReference type="PRO" id="PR:Q96KR7"/>
<dbReference type="Proteomes" id="UP000005640">
    <property type="component" value="Chromosome 20"/>
</dbReference>
<dbReference type="RNAct" id="Q96KR7">
    <property type="molecule type" value="protein"/>
</dbReference>
<dbReference type="Bgee" id="ENSG00000087495">
    <property type="expression patterns" value="Expressed in cortical plate and 133 other cell types or tissues"/>
</dbReference>
<dbReference type="ExpressionAtlas" id="Q96KR7">
    <property type="expression patterns" value="baseline and differential"/>
</dbReference>
<dbReference type="GO" id="GO:0016363">
    <property type="term" value="C:nuclear matrix"/>
    <property type="evidence" value="ECO:0007669"/>
    <property type="project" value="UniProtKB-SubCell"/>
</dbReference>
<dbReference type="GO" id="GO:0005654">
    <property type="term" value="C:nucleoplasm"/>
    <property type="evidence" value="ECO:0000314"/>
    <property type="project" value="HPA"/>
</dbReference>
<dbReference type="GO" id="GO:0003779">
    <property type="term" value="F:actin binding"/>
    <property type="evidence" value="ECO:0000318"/>
    <property type="project" value="GO_Central"/>
</dbReference>
<dbReference type="GO" id="GO:0004864">
    <property type="term" value="F:protein phosphatase inhibitor activity"/>
    <property type="evidence" value="ECO:0007669"/>
    <property type="project" value="UniProtKB-KW"/>
</dbReference>
<dbReference type="GO" id="GO:0030036">
    <property type="term" value="P:actin cytoskeleton organization"/>
    <property type="evidence" value="ECO:0000318"/>
    <property type="project" value="GO_Central"/>
</dbReference>
<dbReference type="Gene3D" id="6.10.140.1750">
    <property type="match status" value="1"/>
</dbReference>
<dbReference type="Gene3D" id="6.10.140.2130">
    <property type="match status" value="1"/>
</dbReference>
<dbReference type="InterPro" id="IPR004018">
    <property type="entry name" value="RPEL_repeat"/>
</dbReference>
<dbReference type="PANTHER" id="PTHR12751:SF7">
    <property type="entry name" value="PHOSPHATASE AND ACTIN REGULATOR 3"/>
    <property type="match status" value="1"/>
</dbReference>
<dbReference type="PANTHER" id="PTHR12751">
    <property type="entry name" value="PHOSPHATASE AND ACTIN REGULATOR PHACTR"/>
    <property type="match status" value="1"/>
</dbReference>
<dbReference type="Pfam" id="PF02755">
    <property type="entry name" value="RPEL"/>
    <property type="match status" value="1"/>
</dbReference>
<dbReference type="SMART" id="SM00707">
    <property type="entry name" value="RPEL"/>
    <property type="match status" value="4"/>
</dbReference>
<dbReference type="PROSITE" id="PS51073">
    <property type="entry name" value="RPEL"/>
    <property type="match status" value="4"/>
</dbReference>
<sequence length="559" mass="62552">MAASEDGSGCLVSRGRSQSDPSVLTDSSATSSADAGENPDEMDQTPPARPEYLVSGIRTPPVRRNSKLATLGRIFKPWKWRKKKNEKLKQTTSALEKKMAGRQGREELIKKGLLEMMEQDAESKTCNPDGGPRSVQSEPPTPKSETLTSEDAQPGSPLATGTDQVSLDKPLSSAAHLDDAAKMPSASSGEEADAGSLLPTTNELSQALAGADSLDSPPRPLERSVGQLPSPPLLPTPPPKASSKTTKNVTGQATLFQASSMKSADPSLRGQLSTPTGSPHLTTVHRPLPPSRVIEELHRALATKHRQDSFQGRESKGSPKKRLDVRLSRTSSVERGKEREEAWSFDGALENKRTAAKESEENKENLIINSELKDDLLLYQDEEALNDSIISGTLPRKCKKELLAVKLRNRPSKQELEDRNIFPRRTDEERQEIRQQIEMKLSKRLSQRPAVEELERRNILKQRNDQTEQEERREIKQRLTRKLNQRPTVDELRDRKILIRFSDYVEVAKAQDYDRRADKPWTRLSAADKAAIRKELNEYKSNEMEVHASSKHLTRFHRP</sequence>
<gene>
    <name type="primary">PHACTR3</name>
    <name type="synonym">C20orf101</name>
    <name type="synonym">SCAPIN1</name>
</gene>
<organism>
    <name type="scientific">Homo sapiens</name>
    <name type="common">Human</name>
    <dbReference type="NCBI Taxonomy" id="9606"/>
    <lineage>
        <taxon>Eukaryota</taxon>
        <taxon>Metazoa</taxon>
        <taxon>Chordata</taxon>
        <taxon>Craniata</taxon>
        <taxon>Vertebrata</taxon>
        <taxon>Euteleostomi</taxon>
        <taxon>Mammalia</taxon>
        <taxon>Eutheria</taxon>
        <taxon>Euarchontoglires</taxon>
        <taxon>Primates</taxon>
        <taxon>Haplorrhini</taxon>
        <taxon>Catarrhini</taxon>
        <taxon>Hominidae</taxon>
        <taxon>Homo</taxon>
    </lineage>
</organism>
<protein>
    <recommendedName>
        <fullName>Phosphatase and actin regulator 3</fullName>
    </recommendedName>
    <alternativeName>
        <fullName>Scaffold-associated PP1-inhibiting protein</fullName>
        <shortName>Scapinin</shortName>
    </alternativeName>
</protein>
<keyword id="KW-0009">Actin-binding</keyword>
<keyword id="KW-0025">Alternative splicing</keyword>
<keyword id="KW-0175">Coiled coil</keyword>
<keyword id="KW-0539">Nucleus</keyword>
<keyword id="KW-0597">Phosphoprotein</keyword>
<keyword id="KW-0650">Protein phosphatase inhibitor</keyword>
<keyword id="KW-1267">Proteomics identification</keyword>
<keyword id="KW-1185">Reference proteome</keyword>
<keyword id="KW-0677">Repeat</keyword>